<protein>
    <recommendedName>
        <fullName evidence="1">4-hydroxy-3-methylbut-2-en-1-yl diphosphate synthase (flavodoxin)</fullName>
        <ecNumber evidence="1">1.17.7.3</ecNumber>
    </recommendedName>
    <alternativeName>
        <fullName evidence="1">1-hydroxy-2-methyl-2-(E)-butenyl 4-diphosphate synthase</fullName>
    </alternativeName>
</protein>
<feature type="chain" id="PRO_1000097155" description="4-hydroxy-3-methylbut-2-en-1-yl diphosphate synthase (flavodoxin)">
    <location>
        <begin position="1"/>
        <end position="602"/>
    </location>
</feature>
<feature type="binding site" evidence="1">
    <location>
        <position position="508"/>
    </location>
    <ligand>
        <name>[4Fe-4S] cluster</name>
        <dbReference type="ChEBI" id="CHEBI:49883"/>
    </ligand>
</feature>
<feature type="binding site" evidence="1">
    <location>
        <position position="511"/>
    </location>
    <ligand>
        <name>[4Fe-4S] cluster</name>
        <dbReference type="ChEBI" id="CHEBI:49883"/>
    </ligand>
</feature>
<feature type="binding site" evidence="1">
    <location>
        <position position="543"/>
    </location>
    <ligand>
        <name>[4Fe-4S] cluster</name>
        <dbReference type="ChEBI" id="CHEBI:49883"/>
    </ligand>
</feature>
<feature type="binding site" evidence="1">
    <location>
        <position position="550"/>
    </location>
    <ligand>
        <name>[4Fe-4S] cluster</name>
        <dbReference type="ChEBI" id="CHEBI:49883"/>
    </ligand>
</feature>
<organism>
    <name type="scientific">Chlamydia trachomatis serovar L2b (strain UCH-1/proctitis)</name>
    <dbReference type="NCBI Taxonomy" id="471473"/>
    <lineage>
        <taxon>Bacteria</taxon>
        <taxon>Pseudomonadati</taxon>
        <taxon>Chlamydiota</taxon>
        <taxon>Chlamydiia</taxon>
        <taxon>Chlamydiales</taxon>
        <taxon>Chlamydiaceae</taxon>
        <taxon>Chlamydia/Chlamydophila group</taxon>
        <taxon>Chlamydia</taxon>
    </lineage>
</organism>
<gene>
    <name evidence="1" type="primary">ispG</name>
    <name type="ordered locus">CTLon_0308</name>
</gene>
<keyword id="KW-0004">4Fe-4S</keyword>
<keyword id="KW-0408">Iron</keyword>
<keyword id="KW-0411">Iron-sulfur</keyword>
<keyword id="KW-0414">Isoprene biosynthesis</keyword>
<keyword id="KW-0479">Metal-binding</keyword>
<keyword id="KW-0560">Oxidoreductase</keyword>
<reference key="1">
    <citation type="journal article" date="2008" name="Genome Res.">
        <title>Chlamydia trachomatis: genome sequence analysis of lymphogranuloma venereum isolates.</title>
        <authorList>
            <person name="Thomson N.R."/>
            <person name="Holden M.T.G."/>
            <person name="Carder C."/>
            <person name="Lennard N."/>
            <person name="Lockey S.J."/>
            <person name="Marsh P."/>
            <person name="Skipp P."/>
            <person name="O'Connor C.D."/>
            <person name="Goodhead I."/>
            <person name="Norbertzcak H."/>
            <person name="Harris B."/>
            <person name="Ormond D."/>
            <person name="Rance R."/>
            <person name="Quail M.A."/>
            <person name="Parkhill J."/>
            <person name="Stephens R.S."/>
            <person name="Clarke I.N."/>
        </authorList>
    </citation>
    <scope>NUCLEOTIDE SEQUENCE [LARGE SCALE GENOMIC DNA]</scope>
    <source>
        <strain>UCH-1/proctitis</strain>
    </source>
</reference>
<dbReference type="EC" id="1.17.7.3" evidence="1"/>
<dbReference type="EMBL" id="AM884177">
    <property type="protein sequence ID" value="CAP06706.1"/>
    <property type="molecule type" value="Genomic_DNA"/>
</dbReference>
<dbReference type="RefSeq" id="WP_012263592.1">
    <property type="nucleotide sequence ID" value="NC_010280.2"/>
</dbReference>
<dbReference type="KEGG" id="ctl:CTLon_0308"/>
<dbReference type="HOGENOM" id="CLU_012689_0_0_0"/>
<dbReference type="UniPathway" id="UPA00056">
    <property type="reaction ID" value="UER00096"/>
</dbReference>
<dbReference type="Proteomes" id="UP001154401">
    <property type="component" value="Chromosome"/>
</dbReference>
<dbReference type="GO" id="GO:0051539">
    <property type="term" value="F:4 iron, 4 sulfur cluster binding"/>
    <property type="evidence" value="ECO:0007669"/>
    <property type="project" value="UniProtKB-UniRule"/>
</dbReference>
<dbReference type="GO" id="GO:0046429">
    <property type="term" value="F:4-hydroxy-3-methylbut-2-en-1-yl diphosphate synthase activity (ferredoxin)"/>
    <property type="evidence" value="ECO:0007669"/>
    <property type="project" value="UniProtKB-UniRule"/>
</dbReference>
<dbReference type="GO" id="GO:0141197">
    <property type="term" value="F:4-hydroxy-3-methylbut-2-enyl-diphosphate synthase activity (flavodoxin)"/>
    <property type="evidence" value="ECO:0007669"/>
    <property type="project" value="UniProtKB-EC"/>
</dbReference>
<dbReference type="GO" id="GO:0005506">
    <property type="term" value="F:iron ion binding"/>
    <property type="evidence" value="ECO:0007669"/>
    <property type="project" value="InterPro"/>
</dbReference>
<dbReference type="GO" id="GO:0019288">
    <property type="term" value="P:isopentenyl diphosphate biosynthetic process, methylerythritol 4-phosphate pathway"/>
    <property type="evidence" value="ECO:0007669"/>
    <property type="project" value="UniProtKB-UniRule"/>
</dbReference>
<dbReference type="GO" id="GO:0016114">
    <property type="term" value="P:terpenoid biosynthetic process"/>
    <property type="evidence" value="ECO:0007669"/>
    <property type="project" value="InterPro"/>
</dbReference>
<dbReference type="FunFam" id="3.20.20.20:FF:000005">
    <property type="entry name" value="4-hydroxy-3-methylbut-2-en-1-yl diphosphate synthase (flavodoxin)"/>
    <property type="match status" value="1"/>
</dbReference>
<dbReference type="FunFam" id="3.30.413.10:FF:000006">
    <property type="entry name" value="4-hydroxy-3-methylbut-2-en-1-yl diphosphate synthase (flavodoxin)"/>
    <property type="match status" value="1"/>
</dbReference>
<dbReference type="Gene3D" id="3.20.20.20">
    <property type="entry name" value="Dihydropteroate synthase-like"/>
    <property type="match status" value="1"/>
</dbReference>
<dbReference type="Gene3D" id="3.30.413.10">
    <property type="entry name" value="Sulfite Reductase Hemoprotein, domain 1"/>
    <property type="match status" value="1"/>
</dbReference>
<dbReference type="HAMAP" id="MF_00159">
    <property type="entry name" value="IspG"/>
    <property type="match status" value="1"/>
</dbReference>
<dbReference type="InterPro" id="IPR011005">
    <property type="entry name" value="Dihydropteroate_synth-like_sf"/>
</dbReference>
<dbReference type="InterPro" id="IPR017178">
    <property type="entry name" value="IspG_atypical"/>
</dbReference>
<dbReference type="InterPro" id="IPR004588">
    <property type="entry name" value="IspG_bac-typ"/>
</dbReference>
<dbReference type="InterPro" id="IPR045854">
    <property type="entry name" value="NO2/SO3_Rdtase_4Fe4S_sf"/>
</dbReference>
<dbReference type="NCBIfam" id="TIGR00612">
    <property type="entry name" value="ispG_gcpE"/>
    <property type="match status" value="1"/>
</dbReference>
<dbReference type="NCBIfam" id="NF001912">
    <property type="entry name" value="PRK00694.1"/>
    <property type="match status" value="1"/>
</dbReference>
<dbReference type="PANTHER" id="PTHR30454">
    <property type="entry name" value="4-HYDROXY-3-METHYLBUT-2-EN-1-YL DIPHOSPHATE SYNTHASE"/>
    <property type="match status" value="1"/>
</dbReference>
<dbReference type="PANTHER" id="PTHR30454:SF0">
    <property type="entry name" value="4-HYDROXY-3-METHYLBUT-2-EN-1-YL DIPHOSPHATE SYNTHASE (FERREDOXIN), CHLOROPLASTIC"/>
    <property type="match status" value="1"/>
</dbReference>
<dbReference type="Pfam" id="PF04551">
    <property type="entry name" value="GcpE"/>
    <property type="match status" value="2"/>
</dbReference>
<dbReference type="PIRSF" id="PIRSF037336">
    <property type="entry name" value="IspG_like"/>
    <property type="match status" value="1"/>
</dbReference>
<dbReference type="SUPFAM" id="SSF56014">
    <property type="entry name" value="Nitrite and sulphite reductase 4Fe-4S domain-like"/>
    <property type="match status" value="1"/>
</dbReference>
<comment type="function">
    <text evidence="1">Converts 2C-methyl-D-erythritol 2,4-cyclodiphosphate (ME-2,4cPP) into 1-hydroxy-2-methyl-2-(E)-butenyl 4-diphosphate.</text>
</comment>
<comment type="catalytic activity">
    <reaction evidence="1">
        <text>(2E)-4-hydroxy-3-methylbut-2-enyl diphosphate + oxidized [flavodoxin] + H2O + 2 H(+) = 2-C-methyl-D-erythritol 2,4-cyclic diphosphate + reduced [flavodoxin]</text>
        <dbReference type="Rhea" id="RHEA:43604"/>
        <dbReference type="Rhea" id="RHEA-COMP:10622"/>
        <dbReference type="Rhea" id="RHEA-COMP:10623"/>
        <dbReference type="ChEBI" id="CHEBI:15377"/>
        <dbReference type="ChEBI" id="CHEBI:15378"/>
        <dbReference type="ChEBI" id="CHEBI:57618"/>
        <dbReference type="ChEBI" id="CHEBI:58210"/>
        <dbReference type="ChEBI" id="CHEBI:58483"/>
        <dbReference type="ChEBI" id="CHEBI:128753"/>
        <dbReference type="EC" id="1.17.7.3"/>
    </reaction>
</comment>
<comment type="cofactor">
    <cofactor evidence="1">
        <name>[4Fe-4S] cluster</name>
        <dbReference type="ChEBI" id="CHEBI:49883"/>
    </cofactor>
    <text evidence="1">Binds 1 [4Fe-4S] cluster.</text>
</comment>
<comment type="pathway">
    <text evidence="1">Isoprenoid biosynthesis; isopentenyl diphosphate biosynthesis via DXP pathway; isopentenyl diphosphate from 1-deoxy-D-xylulose 5-phosphate: step 5/6.</text>
</comment>
<comment type="similarity">
    <text evidence="1">Belongs to the IspG family.</text>
</comment>
<name>ISPG_CHLTB</name>
<sequence>MATPCIQNAFRRKTLPVRIGDLFVGSEHSIKIQSMTTTATTDVDGTVRQICALQEWGCDIVRVTVQGLREVHACEHIKDRLIQQNISIPLVADIHFFPQAAIHVVDCVDKVRINPGNYVDKRNMFTGKIYSDEQYAHSLEHLMNKFSPLVEKCKRLGKAMRIGVNHGSLSERVTQRYGNTIEGMVYSALEYAEVCVAMDYHDVIFSMKSSNPKVMVAAYRSLAYELDQREWSYPLHLGVTEAGSGTAGIVKSAVGIGTLLSEGLGDTIRCSLTGSPINEIPICIDLLKQTTELSERWGEADNPFAIHSSKQLGTRNTLNTPPWGNVYGLLINLTDVQLLTAEPIELLQCLGIDTTTGKIDPTTPEGVVVPKAMRSSPIVSEIEKHLLVFNKEDAPILNPMNEEEWLSEETLSAPFVYFEVTDIHTARRFFSLRQHSTQPVCLSFSLDPHLSKNEAIIDLSARLGALLLDGLGSCVLLDFVDIKLSRTLGFLILQSANIRSVTVEYVSCPGCGRTLFDLLAVSQRIRERTKHLPGGLKIAVMGCIVNGPGEMADADFGYVGSKPGMIDLYVKHKCVKSCIPIENAEEELVQLLKEHGVWKEPE</sequence>
<proteinExistence type="inferred from homology"/>
<accession>B0BB44</accession>
<evidence type="ECO:0000255" key="1">
    <source>
        <dbReference type="HAMAP-Rule" id="MF_00159"/>
    </source>
</evidence>